<protein>
    <recommendedName>
        <fullName>Putative pancreatic polypeptide 2</fullName>
    </recommendedName>
</protein>
<proteinExistence type="uncertain"/>
<organism>
    <name type="scientific">Homo sapiens</name>
    <name type="common">Human</name>
    <dbReference type="NCBI Taxonomy" id="9606"/>
    <lineage>
        <taxon>Eukaryota</taxon>
        <taxon>Metazoa</taxon>
        <taxon>Chordata</taxon>
        <taxon>Craniata</taxon>
        <taxon>Vertebrata</taxon>
        <taxon>Euteleostomi</taxon>
        <taxon>Mammalia</taxon>
        <taxon>Eutheria</taxon>
        <taxon>Euarchontoglires</taxon>
        <taxon>Primates</taxon>
        <taxon>Haplorrhini</taxon>
        <taxon>Catarrhini</taxon>
        <taxon>Hominidae</taxon>
        <taxon>Homo</taxon>
    </lineage>
</organism>
<name>PPY2_HUMAN</name>
<gene>
    <name type="primary">PPY2P</name>
    <name type="synonym">PPY2</name>
</gene>
<dbReference type="EMBL" id="AF222903">
    <property type="protein sequence ID" value="AAF73875.1"/>
    <property type="molecule type" value="mRNA"/>
</dbReference>
<dbReference type="BioMuta" id="HGNC:9328"/>
<dbReference type="AGR" id="HGNC:9328"/>
<dbReference type="GeneCards" id="PPY2P"/>
<dbReference type="HGNC" id="HGNC:9328">
    <property type="gene designation" value="PPY2P"/>
</dbReference>
<dbReference type="MIM" id="606638">
    <property type="type" value="gene"/>
</dbReference>
<dbReference type="neXtProt" id="NX_Q9NRI7"/>
<dbReference type="InParanoid" id="Q9NRI7"/>
<dbReference type="PAN-GO" id="Q9NRI7">
    <property type="GO annotations" value="0 GO annotations based on evolutionary models"/>
</dbReference>
<dbReference type="PathwayCommons" id="Q9NRI7"/>
<dbReference type="Pharos" id="Q9NRI7">
    <property type="development level" value="Tdark"/>
</dbReference>
<dbReference type="Proteomes" id="UP000005640">
    <property type="component" value="Unplaced"/>
</dbReference>
<evidence type="ECO:0000305" key="1"/>
<keyword id="KW-1185">Reference proteome</keyword>
<sequence length="21" mass="2179">MAAACRCLSLLLLSTCVALLL</sequence>
<feature type="peptide" id="PRO_0000314176" description="Putative pancreatic polypeptide 2">
    <location>
        <begin position="1"/>
        <end position="21"/>
    </location>
</feature>
<accession>Q9NRI7</accession>
<reference key="1">
    <citation type="journal article" date="2000" name="Genomics">
        <title>Peptide YY-2 (PYY2) and pancreatic polypeptide-2 (PPY2): species-specific evolution of novel members of the neuropeptide Y gene family.</title>
        <authorList>
            <person name="Couzens M."/>
            <person name="Liu M."/>
            <person name="Tuechler C."/>
            <person name="Kofler B."/>
            <person name="Nessler-Menardi C."/>
            <person name="Parker R.M.C."/>
            <person name="Klocker H."/>
            <person name="Herzog H."/>
        </authorList>
    </citation>
    <scope>NUCLEOTIDE SEQUENCE [MRNA]</scope>
</reference>
<comment type="similarity">
    <text evidence="1">Belongs to the NPY family.</text>
</comment>
<comment type="caution">
    <text evidence="1">Could be the product of a pseudogene. A single point mutation in the signal peptide region of the PPY2 gene introduces a premature stop codon, reducing the predicated size of the precursor to only 21 amino acids.</text>
</comment>